<comment type="function">
    <text evidence="1">NDH-1 shuttles electrons from NADH, via FMN and iron-sulfur (Fe-S) centers, to quinones in the respiratory chain. The immediate electron acceptor for the enzyme in this species is believed to be ubiquinone. Couples the redox reaction to proton translocation (for every two electrons transferred, four hydrogen ions are translocated across the cytoplasmic membrane), and thus conserves the redox energy in a proton gradient.</text>
</comment>
<comment type="catalytic activity">
    <reaction evidence="1">
        <text>a quinone + NADH + 5 H(+)(in) = a quinol + NAD(+) + 4 H(+)(out)</text>
        <dbReference type="Rhea" id="RHEA:57888"/>
        <dbReference type="ChEBI" id="CHEBI:15378"/>
        <dbReference type="ChEBI" id="CHEBI:24646"/>
        <dbReference type="ChEBI" id="CHEBI:57540"/>
        <dbReference type="ChEBI" id="CHEBI:57945"/>
        <dbReference type="ChEBI" id="CHEBI:132124"/>
    </reaction>
</comment>
<comment type="subunit">
    <text evidence="1">NDH-1 is composed of 13 different subunits. Subunits NuoB, CD, E, F, and G constitute the peripheral sector of the complex.</text>
</comment>
<comment type="subcellular location">
    <subcellularLocation>
        <location evidence="1">Cell inner membrane</location>
        <topology evidence="1">Peripheral membrane protein</topology>
        <orientation evidence="1">Cytoplasmic side</orientation>
    </subcellularLocation>
</comment>
<comment type="similarity">
    <text evidence="1">In the N-terminal section; belongs to the complex I 30 kDa subunit family.</text>
</comment>
<comment type="similarity">
    <text evidence="1">In the C-terminal section; belongs to the complex I 49 kDa subunit family.</text>
</comment>
<reference key="1">
    <citation type="journal article" date="2004" name="PLoS Biol.">
        <title>Genomic insights into methanotrophy: the complete genome sequence of Methylococcus capsulatus (Bath).</title>
        <authorList>
            <person name="Ward N.L."/>
            <person name="Larsen O."/>
            <person name="Sakwa J."/>
            <person name="Bruseth L."/>
            <person name="Khouri H.M."/>
            <person name="Durkin A.S."/>
            <person name="Dimitrov G."/>
            <person name="Jiang L."/>
            <person name="Scanlan D."/>
            <person name="Kang K.H."/>
            <person name="Lewis M.R."/>
            <person name="Nelson K.E."/>
            <person name="Methe B.A."/>
            <person name="Wu M."/>
            <person name="Heidelberg J.F."/>
            <person name="Paulsen I.T."/>
            <person name="Fouts D.E."/>
            <person name="Ravel J."/>
            <person name="Tettelin H."/>
            <person name="Ren Q."/>
            <person name="Read T.D."/>
            <person name="DeBoy R.T."/>
            <person name="Seshadri R."/>
            <person name="Salzberg S.L."/>
            <person name="Jensen H.B."/>
            <person name="Birkeland N.K."/>
            <person name="Nelson W.C."/>
            <person name="Dodson R.J."/>
            <person name="Grindhaug S.H."/>
            <person name="Holt I.E."/>
            <person name="Eidhammer I."/>
            <person name="Jonasen I."/>
            <person name="Vanaken S."/>
            <person name="Utterback T.R."/>
            <person name="Feldblyum T.V."/>
            <person name="Fraser C.M."/>
            <person name="Lillehaug J.R."/>
            <person name="Eisen J.A."/>
        </authorList>
    </citation>
    <scope>NUCLEOTIDE SEQUENCE [LARGE SCALE GENOMIC DNA]</scope>
    <source>
        <strain>ATCC 33009 / NCIMB 11132 / Bath</strain>
    </source>
</reference>
<keyword id="KW-0997">Cell inner membrane</keyword>
<keyword id="KW-1003">Cell membrane</keyword>
<keyword id="KW-0472">Membrane</keyword>
<keyword id="KW-0511">Multifunctional enzyme</keyword>
<keyword id="KW-0520">NAD</keyword>
<keyword id="KW-0874">Quinone</keyword>
<keyword id="KW-1185">Reference proteome</keyword>
<keyword id="KW-1278">Translocase</keyword>
<keyword id="KW-0813">Transport</keyword>
<keyword id="KW-0830">Ubiquinone</keyword>
<feature type="chain" id="PRO_0000358649" description="NADH-quinone oxidoreductase subunit C/D">
    <location>
        <begin position="1"/>
        <end position="587"/>
    </location>
</feature>
<feature type="region of interest" description="NADH dehydrogenase I subunit C" evidence="1">
    <location>
        <begin position="1"/>
        <end position="178"/>
    </location>
</feature>
<feature type="region of interest" description="NADH dehydrogenase I subunit D" evidence="1">
    <location>
        <begin position="202"/>
        <end position="587"/>
    </location>
</feature>
<gene>
    <name evidence="1" type="primary">nuoC</name>
    <name evidence="1" type="synonym">nuoCD</name>
    <name evidence="1" type="synonym">nuoD</name>
    <name type="ordered locus">MCA1357</name>
</gene>
<organism>
    <name type="scientific">Methylococcus capsulatus (strain ATCC 33009 / NCIMB 11132 / Bath)</name>
    <dbReference type="NCBI Taxonomy" id="243233"/>
    <lineage>
        <taxon>Bacteria</taxon>
        <taxon>Pseudomonadati</taxon>
        <taxon>Pseudomonadota</taxon>
        <taxon>Gammaproteobacteria</taxon>
        <taxon>Methylococcales</taxon>
        <taxon>Methylococcaceae</taxon>
        <taxon>Methylococcus</taxon>
    </lineage>
</organism>
<dbReference type="EC" id="7.1.1.-" evidence="1"/>
<dbReference type="EMBL" id="AE017282">
    <property type="protein sequence ID" value="AAU92577.1"/>
    <property type="molecule type" value="Genomic_DNA"/>
</dbReference>
<dbReference type="RefSeq" id="WP_010960637.1">
    <property type="nucleotide sequence ID" value="NC_002977.6"/>
</dbReference>
<dbReference type="SMR" id="Q608X9"/>
<dbReference type="STRING" id="243233.MCA1357"/>
<dbReference type="GeneID" id="88223635"/>
<dbReference type="KEGG" id="mca:MCA1357"/>
<dbReference type="eggNOG" id="COG0649">
    <property type="taxonomic scope" value="Bacteria"/>
</dbReference>
<dbReference type="eggNOG" id="COG0852">
    <property type="taxonomic scope" value="Bacteria"/>
</dbReference>
<dbReference type="HOGENOM" id="CLU_015134_3_2_6"/>
<dbReference type="Proteomes" id="UP000006821">
    <property type="component" value="Chromosome"/>
</dbReference>
<dbReference type="GO" id="GO:0005886">
    <property type="term" value="C:plasma membrane"/>
    <property type="evidence" value="ECO:0007669"/>
    <property type="project" value="UniProtKB-SubCell"/>
</dbReference>
<dbReference type="GO" id="GO:0045271">
    <property type="term" value="C:respiratory chain complex I"/>
    <property type="evidence" value="ECO:0000250"/>
    <property type="project" value="GO_Central"/>
</dbReference>
<dbReference type="GO" id="GO:0051287">
    <property type="term" value="F:NAD binding"/>
    <property type="evidence" value="ECO:0007669"/>
    <property type="project" value="InterPro"/>
</dbReference>
<dbReference type="GO" id="GO:0008137">
    <property type="term" value="F:NADH dehydrogenase (ubiquinone) activity"/>
    <property type="evidence" value="ECO:0000250"/>
    <property type="project" value="GO_Central"/>
</dbReference>
<dbReference type="GO" id="GO:0050136">
    <property type="term" value="F:NADH:ubiquinone reductase (non-electrogenic) activity"/>
    <property type="evidence" value="ECO:0007669"/>
    <property type="project" value="UniProtKB-UniRule"/>
</dbReference>
<dbReference type="GO" id="GO:0048038">
    <property type="term" value="F:quinone binding"/>
    <property type="evidence" value="ECO:0007669"/>
    <property type="project" value="UniProtKB-KW"/>
</dbReference>
<dbReference type="GO" id="GO:0022904">
    <property type="term" value="P:respiratory electron transport chain"/>
    <property type="evidence" value="ECO:0000305"/>
    <property type="project" value="GO_Central"/>
</dbReference>
<dbReference type="FunFam" id="1.10.645.10:FF:000001">
    <property type="entry name" value="NADH-quinone oxidoreductase subunit C/D"/>
    <property type="match status" value="1"/>
</dbReference>
<dbReference type="Gene3D" id="1.10.645.10">
    <property type="entry name" value="Cytochrome-c3 Hydrogenase, chain B"/>
    <property type="match status" value="1"/>
</dbReference>
<dbReference type="Gene3D" id="3.30.460.80">
    <property type="entry name" value="NADH:ubiquinone oxidoreductase, 30kDa subunit"/>
    <property type="match status" value="1"/>
</dbReference>
<dbReference type="HAMAP" id="MF_01357">
    <property type="entry name" value="NDH1_NuoC"/>
    <property type="match status" value="1"/>
</dbReference>
<dbReference type="HAMAP" id="MF_01359">
    <property type="entry name" value="NDH1_NuoCD_1"/>
    <property type="match status" value="1"/>
</dbReference>
<dbReference type="HAMAP" id="MF_01358">
    <property type="entry name" value="NDH1_NuoD"/>
    <property type="match status" value="1"/>
</dbReference>
<dbReference type="InterPro" id="IPR010218">
    <property type="entry name" value="NADH_DH_suC"/>
</dbReference>
<dbReference type="InterPro" id="IPR023062">
    <property type="entry name" value="NADH_DH_suCD"/>
</dbReference>
<dbReference type="InterPro" id="IPR001135">
    <property type="entry name" value="NADH_Q_OxRdtase_suD"/>
</dbReference>
<dbReference type="InterPro" id="IPR037232">
    <property type="entry name" value="NADH_quin_OxRdtase_su_C/D-like"/>
</dbReference>
<dbReference type="InterPro" id="IPR001268">
    <property type="entry name" value="NADH_UbQ_OxRdtase_30kDa_su"/>
</dbReference>
<dbReference type="InterPro" id="IPR014029">
    <property type="entry name" value="NADH_UbQ_OxRdtase_49kDa_CS"/>
</dbReference>
<dbReference type="InterPro" id="IPR020396">
    <property type="entry name" value="NADH_UbQ_OxRdtase_CS"/>
</dbReference>
<dbReference type="InterPro" id="IPR022885">
    <property type="entry name" value="NDH1_su_D/H"/>
</dbReference>
<dbReference type="InterPro" id="IPR029014">
    <property type="entry name" value="NiFe-Hase_large"/>
</dbReference>
<dbReference type="NCBIfam" id="TIGR01961">
    <property type="entry name" value="NuoC_fam"/>
    <property type="match status" value="1"/>
</dbReference>
<dbReference type="NCBIfam" id="TIGR01962">
    <property type="entry name" value="NuoD"/>
    <property type="match status" value="1"/>
</dbReference>
<dbReference type="NCBIfam" id="NF004739">
    <property type="entry name" value="PRK06075.1"/>
    <property type="match status" value="1"/>
</dbReference>
<dbReference type="NCBIfam" id="NF008728">
    <property type="entry name" value="PRK11742.1"/>
    <property type="match status" value="1"/>
</dbReference>
<dbReference type="PANTHER" id="PTHR11993:SF45">
    <property type="entry name" value="NADH-QUINONE OXIDOREDUCTASE SUBUNIT C_D"/>
    <property type="match status" value="1"/>
</dbReference>
<dbReference type="PANTHER" id="PTHR11993">
    <property type="entry name" value="NADH-UBIQUINONE OXIDOREDUCTASE 49 KDA SUBUNIT"/>
    <property type="match status" value="1"/>
</dbReference>
<dbReference type="Pfam" id="PF00329">
    <property type="entry name" value="Complex1_30kDa"/>
    <property type="match status" value="1"/>
</dbReference>
<dbReference type="Pfam" id="PF00346">
    <property type="entry name" value="Complex1_49kDa"/>
    <property type="match status" value="1"/>
</dbReference>
<dbReference type="SUPFAM" id="SSF56762">
    <property type="entry name" value="HydB/Nqo4-like"/>
    <property type="match status" value="1"/>
</dbReference>
<dbReference type="SUPFAM" id="SSF143243">
    <property type="entry name" value="Nqo5-like"/>
    <property type="match status" value="1"/>
</dbReference>
<dbReference type="PROSITE" id="PS00542">
    <property type="entry name" value="COMPLEX1_30K"/>
    <property type="match status" value="1"/>
</dbReference>
<dbReference type="PROSITE" id="PS00535">
    <property type="entry name" value="COMPLEX1_49K"/>
    <property type="match status" value="1"/>
</dbReference>
<proteinExistence type="inferred from homology"/>
<protein>
    <recommendedName>
        <fullName evidence="1">NADH-quinone oxidoreductase subunit C/D</fullName>
        <ecNumber evidence="1">7.1.1.-</ecNumber>
    </recommendedName>
    <alternativeName>
        <fullName evidence="1">NADH dehydrogenase I subunit C/D</fullName>
    </alternativeName>
    <alternativeName>
        <fullName evidence="1">NDH-1 subunit C/D</fullName>
    </alternativeName>
</protein>
<name>NUOCD_METCA</name>
<evidence type="ECO:0000255" key="1">
    <source>
        <dbReference type="HAMAP-Rule" id="MF_01359"/>
    </source>
</evidence>
<accession>Q608X9</accession>
<sequence>MAAPTTEHAETIVPALCRRFGGETFVQQTTADGISTLWLPARILVETIRYLRSEIDRPYALLFDLTAVDERVRKHRDGMPASAYTVVYHLVSLERNADVRLKIALPETDPALPSIVAVCPAANWYEREVWDMFGIRFDGHPNLRRLIMPPTWQGHPLRKDHPARATEMEPFSLPDDVQQQEQEALRFVPEEWGMQRQSEDTDFLFLNLGPNHPSVHGVFRVALQLDGEEIVDAVPDIGYHHRGAEKMGERQSWHSYIPYTDRIDYLGGSMNNLPYVMAVEKLAGIEVPERARVIRVMISEFYRIASHLLFYGTFAQDVGQMSPIFYMFIDRERVFEIIESFTGARMHSSFFRIGGVAMDLPEGWDRLIREFIAYFPRRLAEYDKAVMANKLIQRRTRGIGAYTTTEAIDWSVTGAGLRATGLPWDYRKARPYSGYENFEFDVPTGTNGDCYDRCAVRVEEMRQSLRIIEQCVEHMPSGPYKAEHPLTTPPPKERTMHDIETLIQHFLSVSWGPVIPPGEVCVTIEATKGLNGYYLTSDGGTMSYRTRIRTPSFPHLQMIPLMSRGMMVADLIAILASIDFVMADVDR</sequence>